<accession>Q9XVW1</accession>
<evidence type="ECO:0000255" key="1"/>
<evidence type="ECO:0000269" key="2">
    <source>
    </source>
</evidence>
<evidence type="ECO:0000269" key="3">
    <source>
    </source>
</evidence>
<evidence type="ECO:0000269" key="4">
    <source>
    </source>
</evidence>
<evidence type="ECO:0000269" key="5">
    <source>
    </source>
</evidence>
<evidence type="ECO:0000269" key="6">
    <source>
    </source>
</evidence>
<evidence type="ECO:0000303" key="7">
    <source>
    </source>
</evidence>
<evidence type="ECO:0000305" key="8"/>
<evidence type="ECO:0000312" key="9">
    <source>
        <dbReference type="Proteomes" id="UP000001940"/>
    </source>
</evidence>
<evidence type="ECO:0000312" key="10">
    <source>
        <dbReference type="WormBase" id="W07A12.7"/>
    </source>
</evidence>
<comment type="function">
    <text evidence="3 4 5 6">Involved in the response to variation in environmental oxygen levels by inhibiting hif-1-mediated gene transcription in a vhl-1-independent manner (PubMed:16980385). Plays a role in susceptibility to killing mediated by P.aeruginosa and by pore-forming toxins produced by B.thuringiensis (PubMed:20011506, PubMed:20865124). Probably by preventing hif-1 transcriptional activity, regulates behavioral responses, such as locomotion speed following acute reoxygenation (PubMed:22405203). Plays a role in normal egg-laying probably by regulating spermatogenesis and in body morphogenesis (PubMed:16980385).</text>
</comment>
<comment type="subcellular location">
    <subcellularLocation>
        <location evidence="3">Endoplasmic reticulum membrane</location>
        <topology evidence="1">Multi-pass membrane protein</topology>
    </subcellularLocation>
</comment>
<comment type="tissue specificity">
    <text evidence="3">Expressed in intestine, some sensory neurons in the head, body wall muscles and socket cells.</text>
</comment>
<comment type="developmental stage">
    <text evidence="3">In L4 stage, expressed in vulva, ventral nerve cord, tail and at higher levels in hypodermis.</text>
</comment>
<comment type="induction">
    <text evidence="2">Induced by hypoxia.</text>
</comment>
<comment type="disruption phenotype">
    <text evidence="6">Impaired acute acceleration of locomotion speed upon rapid increase in oxygen levels (from 0% to 5-20% oxygen). In double mutants for both rhy-1 and hif-1, normal increase in locomotion speed is restored.</text>
</comment>
<organism evidence="9">
    <name type="scientific">Caenorhabditis elegans</name>
    <dbReference type="NCBI Taxonomy" id="6239"/>
    <lineage>
        <taxon>Eukaryota</taxon>
        <taxon>Metazoa</taxon>
        <taxon>Ecdysozoa</taxon>
        <taxon>Nematoda</taxon>
        <taxon>Chromadorea</taxon>
        <taxon>Rhabditida</taxon>
        <taxon>Rhabditina</taxon>
        <taxon>Rhabditomorpha</taxon>
        <taxon>Rhabditoidea</taxon>
        <taxon>Rhabditidae</taxon>
        <taxon>Peloderinae</taxon>
        <taxon>Caenorhabditis</taxon>
    </lineage>
</organism>
<protein>
    <recommendedName>
        <fullName evidence="7">Regulator of hypoxia-inducible factor 1</fullName>
    </recommendedName>
</protein>
<gene>
    <name evidence="10" type="primary">rhy-1</name>
    <name evidence="10" type="ORF">W07A12.7</name>
</gene>
<keyword id="KW-0256">Endoplasmic reticulum</keyword>
<keyword id="KW-0472">Membrane</keyword>
<keyword id="KW-1185">Reference proteome</keyword>
<keyword id="KW-0812">Transmembrane</keyword>
<keyword id="KW-1133">Transmembrane helix</keyword>
<reference evidence="9" key="1">
    <citation type="journal article" date="1998" name="Science">
        <title>Genome sequence of the nematode C. elegans: a platform for investigating biology.</title>
        <authorList>
            <consortium name="The C. elegans sequencing consortium"/>
        </authorList>
    </citation>
    <scope>NUCLEOTIDE SEQUENCE [LARGE SCALE GENOMIC DNA]</scope>
    <source>
        <strain evidence="9">Bristol N2</strain>
    </source>
</reference>
<reference evidence="8" key="2">
    <citation type="journal article" date="2005" name="J. Biol. Chem.">
        <title>Roles of the HIF-1 hypoxia-inducible factor during hypoxia response in Caenorhabditis elegans.</title>
        <authorList>
            <person name="Shen C."/>
            <person name="Nettleton D."/>
            <person name="Jiang M."/>
            <person name="Kim S.K."/>
            <person name="Powell-Coffman J.A."/>
        </authorList>
    </citation>
    <scope>INDUCTION BY HYPOXIA</scope>
</reference>
<reference evidence="8" key="3">
    <citation type="journal article" date="2006" name="Genetics">
        <title>The Caenorhabditis elegans rhy-1 gene inhibits HIF-1 hypoxia-inducible factor activity in a negative feedback loop that does not include vhl-1.</title>
        <authorList>
            <person name="Shen C."/>
            <person name="Shao Z."/>
            <person name="Powell-Coffman J.A."/>
        </authorList>
    </citation>
    <scope>FUNCTION</scope>
    <scope>SUBCELLULAR LOCATION</scope>
    <scope>TISSUE SPECIFICITY</scope>
    <scope>DEVELOPMENTAL STAGE</scope>
    <scope>MUTAGENESIS OF SER-157</scope>
</reference>
<reference evidence="8" key="4">
    <citation type="journal article" date="2009" name="PLoS Pathog.">
        <title>Hypoxia and the hypoxic response pathway protect against pore-forming toxins in C. elegans.</title>
        <authorList>
            <person name="Bellier A."/>
            <person name="Chen C.S."/>
            <person name="Kao C.Y."/>
            <person name="Cinar H.N."/>
            <person name="Aroian R.V."/>
        </authorList>
    </citation>
    <scope>FUNCTION</scope>
</reference>
<reference evidence="8" key="5">
    <citation type="journal article" date="2010" name="PLoS Pathog.">
        <title>C. elegans SWAN-1 Binds to EGL-9 and regulates HIF-1-mediated resistance to the bacterial pathogen Pseudomonas aeruginosa PAO1.</title>
        <authorList>
            <person name="Shao Z."/>
            <person name="Zhang Y."/>
            <person name="Ye Q."/>
            <person name="Saldanha J.N."/>
            <person name="Powell-Coffman J.A."/>
        </authorList>
    </citation>
    <scope>FUNCTION</scope>
</reference>
<reference evidence="8" key="6">
    <citation type="journal article" date="2012" name="Neuron">
        <title>CYSL-1 interacts with the O2-sensing hydroxylase EGL-9 to promote H2S-modulated hypoxia-induced behavioral plasticity in C. elegans.</title>
        <authorList>
            <person name="Ma D.K."/>
            <person name="Vozdek R."/>
            <person name="Bhatla N."/>
            <person name="Horvitz H.R."/>
        </authorList>
    </citation>
    <scope>FUNCTION</scope>
    <scope>DISRUPTION PHENOTYPE</scope>
    <scope>MUTAGENESIS OF GLY-149</scope>
</reference>
<feature type="chain" id="PRO_0000433364" description="Regulator of hypoxia-inducible factor 1" evidence="8">
    <location>
        <begin position="1"/>
        <end position="502"/>
    </location>
</feature>
<feature type="transmembrane region" description="Helical; Name=1" evidence="1">
    <location>
        <begin position="54"/>
        <end position="74"/>
    </location>
</feature>
<feature type="transmembrane region" description="Helical; Name=2" evidence="1">
    <location>
        <begin position="92"/>
        <end position="112"/>
    </location>
</feature>
<feature type="transmembrane region" description="Helical; Name=3" evidence="1">
    <location>
        <begin position="138"/>
        <end position="158"/>
    </location>
</feature>
<feature type="transmembrane region" description="Helical; Name=4" evidence="1">
    <location>
        <begin position="188"/>
        <end position="208"/>
    </location>
</feature>
<feature type="transmembrane region" description="Helical; Name=5" evidence="1">
    <location>
        <begin position="241"/>
        <end position="261"/>
    </location>
</feature>
<feature type="transmembrane region" description="Helical; Name=6" evidence="1">
    <location>
        <begin position="272"/>
        <end position="292"/>
    </location>
</feature>
<feature type="transmembrane region" description="Helical; Name=7" evidence="1">
    <location>
        <begin position="335"/>
        <end position="355"/>
    </location>
</feature>
<feature type="transmembrane region" description="Helical; Name=8" evidence="1">
    <location>
        <begin position="367"/>
        <end position="387"/>
    </location>
</feature>
<feature type="transmembrane region" description="Helical; Name=9" evidence="1">
    <location>
        <begin position="396"/>
        <end position="416"/>
    </location>
</feature>
<feature type="transmembrane region" description="Helical; Name=10" evidence="1">
    <location>
        <begin position="437"/>
        <end position="457"/>
    </location>
</feature>
<feature type="transmembrane region" description="Helical; Name=11" evidence="1">
    <location>
        <begin position="465"/>
        <end position="485"/>
    </location>
</feature>
<feature type="mutagenesis site" description="In 5500; impaired hypoxia-induced behavioral plasticity." evidence="6">
    <original>G</original>
    <variation>E</variation>
    <location>
        <position position="149"/>
    </location>
</feature>
<feature type="mutagenesis site" description="In ia38; loss of inhibition of hif-1 activity." evidence="3">
    <original>S</original>
    <variation>F</variation>
    <location>
        <position position="157"/>
    </location>
</feature>
<proteinExistence type="evidence at protein level"/>
<dbReference type="EMBL" id="Z68320">
    <property type="protein sequence ID" value="CAA92706.1"/>
    <property type="molecule type" value="Genomic_DNA"/>
</dbReference>
<dbReference type="PIR" id="T26256">
    <property type="entry name" value="T26256"/>
</dbReference>
<dbReference type="RefSeq" id="NP_495954.1">
    <property type="nucleotide sequence ID" value="NM_063553.5"/>
</dbReference>
<dbReference type="FunCoup" id="Q9XVW1">
    <property type="interactions" value="17"/>
</dbReference>
<dbReference type="STRING" id="6239.W07A12.7.1"/>
<dbReference type="PaxDb" id="6239-W07A12.7"/>
<dbReference type="EnsemblMetazoa" id="W07A12.7.1">
    <property type="protein sequence ID" value="W07A12.7.1"/>
    <property type="gene ID" value="WBGene00012324"/>
</dbReference>
<dbReference type="GeneID" id="174455"/>
<dbReference type="KEGG" id="cel:CELE_W07A12.7"/>
<dbReference type="UCSC" id="W07A12.7">
    <property type="organism name" value="c. elegans"/>
</dbReference>
<dbReference type="AGR" id="WB:WBGene00012324"/>
<dbReference type="CTD" id="174455"/>
<dbReference type="WormBase" id="W07A12.7">
    <property type="protein sequence ID" value="CE20163"/>
    <property type="gene ID" value="WBGene00012324"/>
    <property type="gene designation" value="rhy-1"/>
</dbReference>
<dbReference type="eggNOG" id="KOG3700">
    <property type="taxonomic scope" value="Eukaryota"/>
</dbReference>
<dbReference type="GeneTree" id="ENSGT00970000196616"/>
<dbReference type="HOGENOM" id="CLU_032855_0_0_1"/>
<dbReference type="InParanoid" id="Q9XVW1"/>
<dbReference type="OMA" id="YNAYLLH"/>
<dbReference type="OrthoDB" id="118951at2759"/>
<dbReference type="PhylomeDB" id="Q9XVW1"/>
<dbReference type="PRO" id="PR:Q9XVW1"/>
<dbReference type="Proteomes" id="UP000001940">
    <property type="component" value="Chromosome II"/>
</dbReference>
<dbReference type="Bgee" id="WBGene00012324">
    <property type="expression patterns" value="Expressed in embryo and 4 other cell types or tissues"/>
</dbReference>
<dbReference type="GO" id="GO:0005789">
    <property type="term" value="C:endoplasmic reticulum membrane"/>
    <property type="evidence" value="ECO:0007669"/>
    <property type="project" value="UniProtKB-SubCell"/>
</dbReference>
<dbReference type="GO" id="GO:0048471">
    <property type="term" value="C:perinuclear region of cytoplasm"/>
    <property type="evidence" value="ECO:0000314"/>
    <property type="project" value="WormBase"/>
</dbReference>
<dbReference type="GO" id="GO:0016747">
    <property type="term" value="F:acyltransferase activity, transferring groups other than amino-acyl groups"/>
    <property type="evidence" value="ECO:0007669"/>
    <property type="project" value="InterPro"/>
</dbReference>
<dbReference type="GO" id="GO:1900038">
    <property type="term" value="P:negative regulation of cellular response to hypoxia"/>
    <property type="evidence" value="ECO:0000315"/>
    <property type="project" value="CACAO"/>
</dbReference>
<dbReference type="GO" id="GO:0001666">
    <property type="term" value="P:response to hypoxia"/>
    <property type="evidence" value="ECO:0000315"/>
    <property type="project" value="WormBase"/>
</dbReference>
<dbReference type="InterPro" id="IPR002656">
    <property type="entry name" value="Acyl_transf_3_dom"/>
</dbReference>
<dbReference type="InterPro" id="IPR052728">
    <property type="entry name" value="O2_lipid_transport_reg"/>
</dbReference>
<dbReference type="PANTHER" id="PTHR11161:SF12">
    <property type="entry name" value="ACYLTRANSFERASE 3 DOMAIN-CONTAINING PROTEIN-RELATED"/>
    <property type="match status" value="1"/>
</dbReference>
<dbReference type="PANTHER" id="PTHR11161">
    <property type="entry name" value="O-ACYLTRANSFERASE"/>
    <property type="match status" value="1"/>
</dbReference>
<dbReference type="Pfam" id="PF01757">
    <property type="entry name" value="Acyl_transf_3"/>
    <property type="match status" value="1"/>
</dbReference>
<sequence length="502" mass="56103">MSSSPHTHTLIIMERLSEVRLYSSPMTSVLNSNLSSCLTNAFIPDTVRMASSPLLAWMTLVVIGTLAPVSVFSCLSLKRSVKELLTERSSKLDVLDIFRFVAILWVMLNHTGSEGRIDILDRLPSADAFKSAMHDHPIFGALMGNSALGVEIFLVLSGLLAARSWLRKADEPFFQHWKSFIARRLLRLAPSMFIFVYIAAGPIMNALLPRYSSSMVSACGFWGILSHVTFTSNWQSTPTCMGYLWYLGLDMQLYMVAPIFLNLLHKFPKRGMALTITTIIASMVIRAGYCTAYGTCNQSDVDIPFISYPGQDAETLKSIYAGLWDMYSRPYTKCGPFLIGLLLGYITVSSKYIMVSTTSKTLFRSSLIVAIATIYAILPEYWNPNAGNTLYNTVYTAVFRSVFAMAISGMIAALYFRQEYRPTNPIFAMLAKLTYNAYLLHMPVVYIFNWLPFLQAATSPIHLLLVLPFVAILSFIAALIFYLFIEAPIGHLTSQYATRLGL</sequence>
<name>RHY1_CAEEL</name>